<comment type="function">
    <text evidence="1">The glycine cleavage system catalyzes the degradation of glycine. The H protein shuttles the methylamine group of glycine from the P protein to the T protein.</text>
</comment>
<comment type="cofactor">
    <cofactor evidence="1">
        <name>(R)-lipoate</name>
        <dbReference type="ChEBI" id="CHEBI:83088"/>
    </cofactor>
    <text evidence="1">Binds 1 lipoyl cofactor covalently.</text>
</comment>
<comment type="subunit">
    <text evidence="1">The glycine cleavage system is composed of four proteins: P, T, L and H.</text>
</comment>
<comment type="similarity">
    <text evidence="1">Belongs to the GcvH family.</text>
</comment>
<organism>
    <name type="scientific">Gloeobacter violaceus (strain ATCC 29082 / PCC 7421)</name>
    <dbReference type="NCBI Taxonomy" id="251221"/>
    <lineage>
        <taxon>Bacteria</taxon>
        <taxon>Bacillati</taxon>
        <taxon>Cyanobacteriota</taxon>
        <taxon>Cyanophyceae</taxon>
        <taxon>Gloeobacterales</taxon>
        <taxon>Gloeobacteraceae</taxon>
        <taxon>Gloeobacter</taxon>
    </lineage>
</organism>
<evidence type="ECO:0000255" key="1">
    <source>
        <dbReference type="HAMAP-Rule" id="MF_00272"/>
    </source>
</evidence>
<evidence type="ECO:0000255" key="2">
    <source>
        <dbReference type="PROSITE-ProRule" id="PRU01066"/>
    </source>
</evidence>
<dbReference type="EMBL" id="BA000045">
    <property type="protein sequence ID" value="BAC91472.1"/>
    <property type="molecule type" value="Genomic_DNA"/>
</dbReference>
<dbReference type="RefSeq" id="NP_926477.1">
    <property type="nucleotide sequence ID" value="NC_005125.1"/>
</dbReference>
<dbReference type="RefSeq" id="WP_011143520.1">
    <property type="nucleotide sequence ID" value="NC_005125.1"/>
</dbReference>
<dbReference type="SMR" id="Q7NFJ4"/>
<dbReference type="FunCoup" id="Q7NFJ4">
    <property type="interactions" value="346"/>
</dbReference>
<dbReference type="STRING" id="251221.gene:10761044"/>
<dbReference type="EnsemblBacteria" id="BAC91472">
    <property type="protein sequence ID" value="BAC91472"/>
    <property type="gene ID" value="BAC91472"/>
</dbReference>
<dbReference type="KEGG" id="gvi:glr3531"/>
<dbReference type="PATRIC" id="fig|251221.4.peg.3564"/>
<dbReference type="eggNOG" id="COG0509">
    <property type="taxonomic scope" value="Bacteria"/>
</dbReference>
<dbReference type="HOGENOM" id="CLU_097408_2_0_3"/>
<dbReference type="InParanoid" id="Q7NFJ4"/>
<dbReference type="OrthoDB" id="9796712at2"/>
<dbReference type="PhylomeDB" id="Q7NFJ4"/>
<dbReference type="Proteomes" id="UP000000557">
    <property type="component" value="Chromosome"/>
</dbReference>
<dbReference type="GO" id="GO:0005829">
    <property type="term" value="C:cytosol"/>
    <property type="evidence" value="ECO:0000318"/>
    <property type="project" value="GO_Central"/>
</dbReference>
<dbReference type="GO" id="GO:0005960">
    <property type="term" value="C:glycine cleavage complex"/>
    <property type="evidence" value="ECO:0007669"/>
    <property type="project" value="InterPro"/>
</dbReference>
<dbReference type="GO" id="GO:0019464">
    <property type="term" value="P:glycine decarboxylation via glycine cleavage system"/>
    <property type="evidence" value="ECO:0007669"/>
    <property type="project" value="UniProtKB-UniRule"/>
</dbReference>
<dbReference type="CDD" id="cd06848">
    <property type="entry name" value="GCS_H"/>
    <property type="match status" value="1"/>
</dbReference>
<dbReference type="Gene3D" id="2.40.50.100">
    <property type="match status" value="1"/>
</dbReference>
<dbReference type="HAMAP" id="MF_00272">
    <property type="entry name" value="GcvH"/>
    <property type="match status" value="1"/>
</dbReference>
<dbReference type="InterPro" id="IPR003016">
    <property type="entry name" value="2-oxoA_DH_lipoyl-BS"/>
</dbReference>
<dbReference type="InterPro" id="IPR000089">
    <property type="entry name" value="Biotin_lipoyl"/>
</dbReference>
<dbReference type="InterPro" id="IPR002930">
    <property type="entry name" value="GCV_H"/>
</dbReference>
<dbReference type="InterPro" id="IPR033753">
    <property type="entry name" value="GCV_H/Fam206"/>
</dbReference>
<dbReference type="InterPro" id="IPR017453">
    <property type="entry name" value="GCV_H_sub"/>
</dbReference>
<dbReference type="InterPro" id="IPR011053">
    <property type="entry name" value="Single_hybrid_motif"/>
</dbReference>
<dbReference type="NCBIfam" id="TIGR00527">
    <property type="entry name" value="gcvH"/>
    <property type="match status" value="1"/>
</dbReference>
<dbReference type="NCBIfam" id="NF002270">
    <property type="entry name" value="PRK01202.1"/>
    <property type="match status" value="1"/>
</dbReference>
<dbReference type="PANTHER" id="PTHR11715">
    <property type="entry name" value="GLYCINE CLEAVAGE SYSTEM H PROTEIN"/>
    <property type="match status" value="1"/>
</dbReference>
<dbReference type="PANTHER" id="PTHR11715:SF3">
    <property type="entry name" value="GLYCINE CLEAVAGE SYSTEM H PROTEIN-RELATED"/>
    <property type="match status" value="1"/>
</dbReference>
<dbReference type="Pfam" id="PF01597">
    <property type="entry name" value="GCV_H"/>
    <property type="match status" value="1"/>
</dbReference>
<dbReference type="SUPFAM" id="SSF51230">
    <property type="entry name" value="Single hybrid motif"/>
    <property type="match status" value="1"/>
</dbReference>
<dbReference type="PROSITE" id="PS50968">
    <property type="entry name" value="BIOTINYL_LIPOYL"/>
    <property type="match status" value="1"/>
</dbReference>
<dbReference type="PROSITE" id="PS00189">
    <property type="entry name" value="LIPOYL"/>
    <property type="match status" value="1"/>
</dbReference>
<accession>Q7NFJ4</accession>
<gene>
    <name evidence="1" type="primary">gcvH</name>
    <name type="ordered locus">glr3531</name>
</gene>
<name>GCSH_GLOVI</name>
<keyword id="KW-0450">Lipoyl</keyword>
<keyword id="KW-1185">Reference proteome</keyword>
<protein>
    <recommendedName>
        <fullName evidence="1">Glycine cleavage system H protein</fullName>
    </recommendedName>
</protein>
<reference key="1">
    <citation type="journal article" date="2003" name="DNA Res.">
        <title>Complete genome structure of Gloeobacter violaceus PCC 7421, a cyanobacterium that lacks thylakoids.</title>
        <authorList>
            <person name="Nakamura Y."/>
            <person name="Kaneko T."/>
            <person name="Sato S."/>
            <person name="Mimuro M."/>
            <person name="Miyashita H."/>
            <person name="Tsuchiya T."/>
            <person name="Sasamoto S."/>
            <person name="Watanabe A."/>
            <person name="Kawashima K."/>
            <person name="Kishida Y."/>
            <person name="Kiyokawa C."/>
            <person name="Kohara M."/>
            <person name="Matsumoto M."/>
            <person name="Matsuno A."/>
            <person name="Nakazaki N."/>
            <person name="Shimpo S."/>
            <person name="Takeuchi C."/>
            <person name="Yamada M."/>
            <person name="Tabata S."/>
        </authorList>
    </citation>
    <scope>NUCLEOTIDE SEQUENCE [LARGE SCALE GENOMIC DNA]</scope>
    <source>
        <strain>ATCC 29082 / PCC 7421</strain>
    </source>
</reference>
<sequence length="129" mass="14100">MALEYPEELKYLDSHEYLRVEGDTVVVGVTSYAVDQLGDIVFVSLPEEGDRINRGDSFGSIESVKAVEELYAPLSGTVLSVNTVAVEDPALIGSDPYGDGWLIKVRLADPADELGETMTAEEYRERVEG</sequence>
<feature type="chain" id="PRO_0000302379" description="Glycine cleavage system H protein">
    <location>
        <begin position="1"/>
        <end position="129"/>
    </location>
</feature>
<feature type="domain" description="Lipoyl-binding" evidence="2">
    <location>
        <begin position="24"/>
        <end position="106"/>
    </location>
</feature>
<feature type="modified residue" description="N6-lipoyllysine" evidence="1">
    <location>
        <position position="65"/>
    </location>
</feature>
<proteinExistence type="inferred from homology"/>